<protein>
    <recommendedName>
        <fullName>HIPL2 protein</fullName>
    </recommendedName>
</protein>
<gene>
    <name type="primary">HIPL2</name>
    <name type="ordered locus">At5g62630</name>
    <name type="ORF">MRG21.4</name>
</gene>
<comment type="cofactor">
    <cofactor evidence="2">
        <name>pyrroloquinoline quinone</name>
        <dbReference type="ChEBI" id="CHEBI:58442"/>
    </cofactor>
</comment>
<comment type="subcellular location">
    <subcellularLocation>
        <location>Cell membrane</location>
        <topology>Lipid-anchor</topology>
        <topology>GPI-anchor</topology>
    </subcellularLocation>
</comment>
<comment type="similarity">
    <text evidence="2">Belongs to the PQQ oxidoreductase GdhB family.</text>
</comment>
<keyword id="KW-1003">Cell membrane</keyword>
<keyword id="KW-0325">Glycoprotein</keyword>
<keyword id="KW-0336">GPI-anchor</keyword>
<keyword id="KW-0449">Lipoprotein</keyword>
<keyword id="KW-0472">Membrane</keyword>
<keyword id="KW-0560">Oxidoreductase</keyword>
<keyword id="KW-0634">PQQ</keyword>
<keyword id="KW-1185">Reference proteome</keyword>
<keyword id="KW-0732">Signal</keyword>
<proteinExistence type="evidence at transcript level"/>
<feature type="signal peptide" evidence="1">
    <location>
        <begin position="1"/>
        <end position="24"/>
    </location>
</feature>
<feature type="chain" id="PRO_0000025587" description="HIPL2 protein">
    <location>
        <begin position="25"/>
        <end position="672"/>
    </location>
</feature>
<feature type="propeptide" id="PRO_0000025588" description="Removed in mature form" evidence="2">
    <location>
        <begin position="673"/>
        <end position="696"/>
    </location>
</feature>
<feature type="lipid moiety-binding region" description="GPI-anchor amidated serine" evidence="1">
    <location>
        <position position="672"/>
    </location>
</feature>
<feature type="glycosylation site" description="N-linked (GlcNAc...) asparagine" evidence="1">
    <location>
        <position position="38"/>
    </location>
</feature>
<feature type="glycosylation site" description="N-linked (GlcNAc...) asparagine" evidence="1">
    <location>
        <position position="69"/>
    </location>
</feature>
<feature type="glycosylation site" description="N-linked (GlcNAc...) asparagine" evidence="1">
    <location>
        <position position="74"/>
    </location>
</feature>
<feature type="glycosylation site" description="N-linked (GlcNAc...) asparagine" evidence="1">
    <location>
        <position position="108"/>
    </location>
</feature>
<feature type="glycosylation site" description="N-linked (GlcNAc...) asparagine" evidence="1">
    <location>
        <position position="124"/>
    </location>
</feature>
<feature type="glycosylation site" description="N-linked (GlcNAc...) asparagine" evidence="1">
    <location>
        <position position="148"/>
    </location>
</feature>
<feature type="glycosylation site" description="N-linked (GlcNAc...) asparagine" evidence="1">
    <location>
        <position position="175"/>
    </location>
</feature>
<feature type="glycosylation site" description="N-linked (GlcNAc...) asparagine" evidence="1">
    <location>
        <position position="339"/>
    </location>
</feature>
<feature type="glycosylation site" description="N-linked (GlcNAc...) asparagine" evidence="1">
    <location>
        <position position="431"/>
    </location>
</feature>
<feature type="glycosylation site" description="N-linked (GlcNAc...) asparagine" evidence="1">
    <location>
        <position position="513"/>
    </location>
</feature>
<feature type="glycosylation site" description="N-linked (GlcNAc...) asparagine" evidence="1">
    <location>
        <position position="519"/>
    </location>
</feature>
<feature type="glycosylation site" description="N-linked (GlcNAc...) asparagine" evidence="1">
    <location>
        <position position="528"/>
    </location>
</feature>
<feature type="glycosylation site" description="N-linked (GlcNAc...) asparagine" evidence="1">
    <location>
        <position position="581"/>
    </location>
</feature>
<feature type="glycosylation site" description="N-linked (GlcNAc...) asparagine" evidence="1">
    <location>
        <position position="651"/>
    </location>
</feature>
<feature type="sequence conflict" description="In Ref. 3; AAK62435/AAM10107." evidence="2" ref="3">
    <original>G</original>
    <variation>V</variation>
    <location>
        <position position="340"/>
    </location>
</feature>
<feature type="sequence conflict" description="In Ref. 3; AAK62435/AAM10107." evidence="2" ref="3">
    <original>I</original>
    <variation>V</variation>
    <location>
        <position position="615"/>
    </location>
</feature>
<accession>Q94F08</accession>
<accession>Q9LV15</accession>
<sequence>MAKTNQAITICSLLLLLLLSETTSHLLCSDSKTPVNNNETLQFCDSYKERSCCNSKDDLQLQNRFNSMNISDSNCSSLLKSILCSKCDEFSGQLFGDDDSSLVPILCNSTSQDLCSKLWDSCQNISIVSSPFSPTLLGGATSPSTSSNSSTLTDLWKSQTEFCTAFGGPSQTNNNKTKCFNGEPVNRDTSDDDEDDVKTPKGICLEKIGTGSYLNMVAHPDGSNRAFFSNQPGKIWLGTIPDQDSGKPMEIDESTPFVDITDQVSFDTQFGMMGMAFHPKFAENGRFFASFNCDKVKSPGCSGRCACNSDVNCDPSKLPKDDGTTPCRYQTVVSEYTANGTSSSPSTAKIGKASEVRRIFTMGLPYSSSHGGQILFGPDGYLYLMTGDGGGVSDTHNFAQNKKSLLGKILRLDVDVMPSVSEISKLGLWGNYSIPKNNPFQGNENEQPEIWALGLRNPWRCSFDSERPDYFLCADVGKDTYEEVDIITMGGNYGWRTYEGPYVFSPLSPFGENVSSDSNLTFPILGYNHSEVNKHEGSASIIGGYFYRSNTDPCSYGTYLYADLYANAMWAAIESPEDSGNFTDSLIPFSCSKDSPMKCTAAPGGASSGPALGYIYSFGQDNNKDIHLLTSSGVYRIVRPSRCNLACSKENTTASAGKQNPAGSAPPQPLPSSARKLCFSVFLLLSLLMMFLTLLD</sequence>
<dbReference type="EMBL" id="AB020751">
    <property type="protein sequence ID" value="BAA97210.1"/>
    <property type="molecule type" value="Genomic_DNA"/>
</dbReference>
<dbReference type="EMBL" id="CP002688">
    <property type="protein sequence ID" value="AED97635.1"/>
    <property type="molecule type" value="Genomic_DNA"/>
</dbReference>
<dbReference type="EMBL" id="AF386990">
    <property type="protein sequence ID" value="AAK62435.1"/>
    <property type="molecule type" value="mRNA"/>
</dbReference>
<dbReference type="EMBL" id="AY081545">
    <property type="protein sequence ID" value="AAM10107.1"/>
    <property type="molecule type" value="mRNA"/>
</dbReference>
<dbReference type="RefSeq" id="NP_201069.1">
    <property type="nucleotide sequence ID" value="NM_125658.3"/>
</dbReference>
<dbReference type="SMR" id="Q94F08"/>
<dbReference type="BioGRID" id="21627">
    <property type="interactions" value="1"/>
</dbReference>
<dbReference type="FunCoup" id="Q94F08">
    <property type="interactions" value="23"/>
</dbReference>
<dbReference type="IntAct" id="Q94F08">
    <property type="interactions" value="1"/>
</dbReference>
<dbReference type="STRING" id="3702.Q94F08"/>
<dbReference type="GlyCosmos" id="Q94F08">
    <property type="glycosylation" value="14 sites, No reported glycans"/>
</dbReference>
<dbReference type="GlyGen" id="Q94F08">
    <property type="glycosylation" value="14 sites"/>
</dbReference>
<dbReference type="PaxDb" id="3702-AT5G62630.1"/>
<dbReference type="ProteomicsDB" id="230226"/>
<dbReference type="EnsemblPlants" id="AT5G62630.1">
    <property type="protein sequence ID" value="AT5G62630.1"/>
    <property type="gene ID" value="AT5G62630"/>
</dbReference>
<dbReference type="GeneID" id="836384"/>
<dbReference type="Gramene" id="AT5G62630.1">
    <property type="protein sequence ID" value="AT5G62630.1"/>
    <property type="gene ID" value="AT5G62630"/>
</dbReference>
<dbReference type="KEGG" id="ath:AT5G62630"/>
<dbReference type="Araport" id="AT5G62630"/>
<dbReference type="TAIR" id="AT5G62630">
    <property type="gene designation" value="HIPL2"/>
</dbReference>
<dbReference type="eggNOG" id="ENOG502QQKP">
    <property type="taxonomic scope" value="Eukaryota"/>
</dbReference>
<dbReference type="HOGENOM" id="CLU_024721_0_0_1"/>
<dbReference type="InParanoid" id="Q94F08"/>
<dbReference type="OMA" id="SCCNSKD"/>
<dbReference type="PhylomeDB" id="Q94F08"/>
<dbReference type="PRO" id="PR:Q94F08"/>
<dbReference type="Proteomes" id="UP000006548">
    <property type="component" value="Chromosome 5"/>
</dbReference>
<dbReference type="ExpressionAtlas" id="Q94F08">
    <property type="expression patterns" value="baseline and differential"/>
</dbReference>
<dbReference type="GO" id="GO:0005886">
    <property type="term" value="C:plasma membrane"/>
    <property type="evidence" value="ECO:0007669"/>
    <property type="project" value="UniProtKB-SubCell"/>
</dbReference>
<dbReference type="GO" id="GO:0009536">
    <property type="term" value="C:plastid"/>
    <property type="evidence" value="ECO:0007005"/>
    <property type="project" value="TAIR"/>
</dbReference>
<dbReference type="GO" id="GO:0098552">
    <property type="term" value="C:side of membrane"/>
    <property type="evidence" value="ECO:0007669"/>
    <property type="project" value="UniProtKB-KW"/>
</dbReference>
<dbReference type="GO" id="GO:0016491">
    <property type="term" value="F:oxidoreductase activity"/>
    <property type="evidence" value="ECO:0007669"/>
    <property type="project" value="UniProtKB-KW"/>
</dbReference>
<dbReference type="FunFam" id="2.120.10.30:FF:000067">
    <property type="entry name" value="HHIP-like 1"/>
    <property type="match status" value="1"/>
</dbReference>
<dbReference type="Gene3D" id="2.120.10.30">
    <property type="entry name" value="TolB, C-terminal domain"/>
    <property type="match status" value="1"/>
</dbReference>
<dbReference type="InterPro" id="IPR011042">
    <property type="entry name" value="6-blade_b-propeller_TolB-like"/>
</dbReference>
<dbReference type="InterPro" id="IPR012938">
    <property type="entry name" value="Glc/Sorbosone_DH"/>
</dbReference>
<dbReference type="InterPro" id="IPR011041">
    <property type="entry name" value="Quinoprot_gluc/sorb_DH_b-prop"/>
</dbReference>
<dbReference type="PANTHER" id="PTHR19328">
    <property type="entry name" value="HEDGEHOG-INTERACTING PROTEIN"/>
    <property type="match status" value="1"/>
</dbReference>
<dbReference type="PANTHER" id="PTHR19328:SF61">
    <property type="entry name" value="HIPL2 PROTEIN"/>
    <property type="match status" value="1"/>
</dbReference>
<dbReference type="Pfam" id="PF07995">
    <property type="entry name" value="GSDH"/>
    <property type="match status" value="1"/>
</dbReference>
<dbReference type="SUPFAM" id="SSF50952">
    <property type="entry name" value="Soluble quinoprotein glucose dehydrogenase"/>
    <property type="match status" value="1"/>
</dbReference>
<organism>
    <name type="scientific">Arabidopsis thaliana</name>
    <name type="common">Mouse-ear cress</name>
    <dbReference type="NCBI Taxonomy" id="3702"/>
    <lineage>
        <taxon>Eukaryota</taxon>
        <taxon>Viridiplantae</taxon>
        <taxon>Streptophyta</taxon>
        <taxon>Embryophyta</taxon>
        <taxon>Tracheophyta</taxon>
        <taxon>Spermatophyta</taxon>
        <taxon>Magnoliopsida</taxon>
        <taxon>eudicotyledons</taxon>
        <taxon>Gunneridae</taxon>
        <taxon>Pentapetalae</taxon>
        <taxon>rosids</taxon>
        <taxon>malvids</taxon>
        <taxon>Brassicales</taxon>
        <taxon>Brassicaceae</taxon>
        <taxon>Camelineae</taxon>
        <taxon>Arabidopsis</taxon>
    </lineage>
</organism>
<reference key="1">
    <citation type="journal article" date="2000" name="DNA Res.">
        <title>Structural analysis of Arabidopsis thaliana chromosome 5. X. Sequence features of the regions of 3,076,755 bp covered by sixty P1 and TAC clones.</title>
        <authorList>
            <person name="Sato S."/>
            <person name="Nakamura Y."/>
            <person name="Kaneko T."/>
            <person name="Katoh T."/>
            <person name="Asamizu E."/>
            <person name="Kotani H."/>
            <person name="Tabata S."/>
        </authorList>
    </citation>
    <scope>NUCLEOTIDE SEQUENCE [LARGE SCALE GENOMIC DNA]</scope>
    <source>
        <strain>cv. Columbia</strain>
    </source>
</reference>
<reference key="2">
    <citation type="journal article" date="2017" name="Plant J.">
        <title>Araport11: a complete reannotation of the Arabidopsis thaliana reference genome.</title>
        <authorList>
            <person name="Cheng C.Y."/>
            <person name="Krishnakumar V."/>
            <person name="Chan A.P."/>
            <person name="Thibaud-Nissen F."/>
            <person name="Schobel S."/>
            <person name="Town C.D."/>
        </authorList>
    </citation>
    <scope>GENOME REANNOTATION</scope>
    <source>
        <strain>cv. Columbia</strain>
    </source>
</reference>
<reference key="3">
    <citation type="journal article" date="2003" name="Science">
        <title>Empirical analysis of transcriptional activity in the Arabidopsis genome.</title>
        <authorList>
            <person name="Yamada K."/>
            <person name="Lim J."/>
            <person name="Dale J.M."/>
            <person name="Chen H."/>
            <person name="Shinn P."/>
            <person name="Palm C.J."/>
            <person name="Southwick A.M."/>
            <person name="Wu H.C."/>
            <person name="Kim C.J."/>
            <person name="Nguyen M."/>
            <person name="Pham P.K."/>
            <person name="Cheuk R.F."/>
            <person name="Karlin-Newmann G."/>
            <person name="Liu S.X."/>
            <person name="Lam B."/>
            <person name="Sakano H."/>
            <person name="Wu T."/>
            <person name="Yu G."/>
            <person name="Miranda M."/>
            <person name="Quach H.L."/>
            <person name="Tripp M."/>
            <person name="Chang C.H."/>
            <person name="Lee J.M."/>
            <person name="Toriumi M.J."/>
            <person name="Chan M.M."/>
            <person name="Tang C.C."/>
            <person name="Onodera C.S."/>
            <person name="Deng J.M."/>
            <person name="Akiyama K."/>
            <person name="Ansari Y."/>
            <person name="Arakawa T."/>
            <person name="Banh J."/>
            <person name="Banno F."/>
            <person name="Bowser L."/>
            <person name="Brooks S.Y."/>
            <person name="Carninci P."/>
            <person name="Chao Q."/>
            <person name="Choy N."/>
            <person name="Enju A."/>
            <person name="Goldsmith A.D."/>
            <person name="Gurjal M."/>
            <person name="Hansen N.F."/>
            <person name="Hayashizaki Y."/>
            <person name="Johnson-Hopson C."/>
            <person name="Hsuan V.W."/>
            <person name="Iida K."/>
            <person name="Karnes M."/>
            <person name="Khan S."/>
            <person name="Koesema E."/>
            <person name="Ishida J."/>
            <person name="Jiang P.X."/>
            <person name="Jones T."/>
            <person name="Kawai J."/>
            <person name="Kamiya A."/>
            <person name="Meyers C."/>
            <person name="Nakajima M."/>
            <person name="Narusaka M."/>
            <person name="Seki M."/>
            <person name="Sakurai T."/>
            <person name="Satou M."/>
            <person name="Tamse R."/>
            <person name="Vaysberg M."/>
            <person name="Wallender E.K."/>
            <person name="Wong C."/>
            <person name="Yamamura Y."/>
            <person name="Yuan S."/>
            <person name="Shinozaki K."/>
            <person name="Davis R.W."/>
            <person name="Theologis A."/>
            <person name="Ecker J.R."/>
        </authorList>
    </citation>
    <scope>NUCLEOTIDE SEQUENCE [LARGE SCALE MRNA]</scope>
    <source>
        <strain>cv. Columbia</strain>
    </source>
</reference>
<name>HIPL2_ARATH</name>
<evidence type="ECO:0000255" key="1"/>
<evidence type="ECO:0000305" key="2"/>